<organism>
    <name type="scientific">Escherichia coli (strain K12)</name>
    <dbReference type="NCBI Taxonomy" id="83333"/>
    <lineage>
        <taxon>Bacteria</taxon>
        <taxon>Pseudomonadati</taxon>
        <taxon>Pseudomonadota</taxon>
        <taxon>Gammaproteobacteria</taxon>
        <taxon>Enterobacterales</taxon>
        <taxon>Enterobacteriaceae</taxon>
        <taxon>Escherichia</taxon>
    </lineage>
</organism>
<dbReference type="EC" id="6.3.3.3" evidence="1"/>
<dbReference type="EMBL" id="U00096">
    <property type="protein sequence ID" value="AAC74665.2"/>
    <property type="molecule type" value="Genomic_DNA"/>
</dbReference>
<dbReference type="EMBL" id="AP009048">
    <property type="protein sequence ID" value="BAA15317.2"/>
    <property type="molecule type" value="Genomic_DNA"/>
</dbReference>
<dbReference type="PIR" id="C64915">
    <property type="entry name" value="C64915"/>
</dbReference>
<dbReference type="RefSeq" id="NP_416110.4">
    <property type="nucleotide sequence ID" value="NC_000913.3"/>
</dbReference>
<dbReference type="SMR" id="P0A6E9"/>
<dbReference type="BioGRID" id="4259412">
    <property type="interactions" value="15"/>
</dbReference>
<dbReference type="BioGRID" id="849325">
    <property type="interactions" value="3"/>
</dbReference>
<dbReference type="FunCoup" id="P0A6E9">
    <property type="interactions" value="542"/>
</dbReference>
<dbReference type="IntAct" id="P0A6E9">
    <property type="interactions" value="3"/>
</dbReference>
<dbReference type="STRING" id="511145.b1593"/>
<dbReference type="jPOST" id="P0A6E9"/>
<dbReference type="PaxDb" id="511145-b1593"/>
<dbReference type="EnsemblBacteria" id="AAC74665">
    <property type="protein sequence ID" value="AAC74665"/>
    <property type="gene ID" value="b1593"/>
</dbReference>
<dbReference type="GeneID" id="944927"/>
<dbReference type="KEGG" id="ecj:JW5264"/>
<dbReference type="KEGG" id="eco:b1593"/>
<dbReference type="KEGG" id="ecoc:C3026_09175"/>
<dbReference type="PATRIC" id="fig|1411691.4.peg.669"/>
<dbReference type="EchoBASE" id="EB3610"/>
<dbReference type="eggNOG" id="COG0132">
    <property type="taxonomic scope" value="Bacteria"/>
</dbReference>
<dbReference type="HOGENOM" id="CLU_072551_0_0_6"/>
<dbReference type="InParanoid" id="P0A6E9"/>
<dbReference type="OMA" id="WRTLMND"/>
<dbReference type="OrthoDB" id="9802097at2"/>
<dbReference type="PhylomeDB" id="P0A6E9"/>
<dbReference type="BioCyc" id="EcoCyc:G6851-MONOMER"/>
<dbReference type="BioCyc" id="MetaCyc:G6851-MONOMER"/>
<dbReference type="UniPathway" id="UPA00078">
    <property type="reaction ID" value="UER00161"/>
</dbReference>
<dbReference type="PRO" id="PR:P0A6E9"/>
<dbReference type="Proteomes" id="UP000000625">
    <property type="component" value="Chromosome"/>
</dbReference>
<dbReference type="GO" id="GO:0005829">
    <property type="term" value="C:cytosol"/>
    <property type="evidence" value="ECO:0000318"/>
    <property type="project" value="GO_Central"/>
</dbReference>
<dbReference type="GO" id="GO:0005524">
    <property type="term" value="F:ATP binding"/>
    <property type="evidence" value="ECO:0007669"/>
    <property type="project" value="UniProtKB-UniRule"/>
</dbReference>
<dbReference type="GO" id="GO:0004141">
    <property type="term" value="F:dethiobiotin synthase activity"/>
    <property type="evidence" value="ECO:0000314"/>
    <property type="project" value="EcoCyc"/>
</dbReference>
<dbReference type="GO" id="GO:0000287">
    <property type="term" value="F:magnesium ion binding"/>
    <property type="evidence" value="ECO:0007669"/>
    <property type="project" value="UniProtKB-UniRule"/>
</dbReference>
<dbReference type="GO" id="GO:0042803">
    <property type="term" value="F:protein homodimerization activity"/>
    <property type="evidence" value="ECO:0000314"/>
    <property type="project" value="EcoCyc"/>
</dbReference>
<dbReference type="GO" id="GO:0009102">
    <property type="term" value="P:biotin biosynthetic process"/>
    <property type="evidence" value="ECO:0000316"/>
    <property type="project" value="EcoCyc"/>
</dbReference>
<dbReference type="CDD" id="cd03109">
    <property type="entry name" value="DTBS"/>
    <property type="match status" value="1"/>
</dbReference>
<dbReference type="FunFam" id="3.40.50.300:FF:000292">
    <property type="entry name" value="ATP-dependent dethiobiotin synthetase BioD"/>
    <property type="match status" value="1"/>
</dbReference>
<dbReference type="Gene3D" id="3.40.50.300">
    <property type="entry name" value="P-loop containing nucleotide triphosphate hydrolases"/>
    <property type="match status" value="1"/>
</dbReference>
<dbReference type="HAMAP" id="MF_00336">
    <property type="entry name" value="BioD"/>
    <property type="match status" value="1"/>
</dbReference>
<dbReference type="InterPro" id="IPR004472">
    <property type="entry name" value="DTB_synth_BioD"/>
</dbReference>
<dbReference type="InterPro" id="IPR027417">
    <property type="entry name" value="P-loop_NTPase"/>
</dbReference>
<dbReference type="NCBIfam" id="TIGR00347">
    <property type="entry name" value="bioD"/>
    <property type="match status" value="1"/>
</dbReference>
<dbReference type="PANTHER" id="PTHR43210:SF4">
    <property type="entry name" value="ATP-DEPENDENT DETHIOBIOTIN SYNTHETASE BIOD 2"/>
    <property type="match status" value="1"/>
</dbReference>
<dbReference type="PANTHER" id="PTHR43210">
    <property type="entry name" value="DETHIOBIOTIN SYNTHETASE"/>
    <property type="match status" value="1"/>
</dbReference>
<dbReference type="Pfam" id="PF13500">
    <property type="entry name" value="AAA_26"/>
    <property type="match status" value="1"/>
</dbReference>
<dbReference type="PIRSF" id="PIRSF006755">
    <property type="entry name" value="DTB_synth"/>
    <property type="match status" value="1"/>
</dbReference>
<dbReference type="SUPFAM" id="SSF52540">
    <property type="entry name" value="P-loop containing nucleoside triphosphate hydrolases"/>
    <property type="match status" value="1"/>
</dbReference>
<comment type="function">
    <text evidence="1">Catalyzes a mechanistically unusual reaction, the ATP-dependent insertion of CO2 between the N7 and N8 nitrogen atoms of 7,8-diaminopelargonic acid (DAPA, also called 7,8-diammoniononanoate) to form a ureido ring.</text>
</comment>
<comment type="catalytic activity">
    <reaction evidence="1">
        <text>(7R,8S)-7,8-diammoniononanoate + CO2 + ATP = (4R,5S)-dethiobiotin + ADP + phosphate + 3 H(+)</text>
        <dbReference type="Rhea" id="RHEA:15805"/>
        <dbReference type="ChEBI" id="CHEBI:15378"/>
        <dbReference type="ChEBI" id="CHEBI:16526"/>
        <dbReference type="ChEBI" id="CHEBI:30616"/>
        <dbReference type="ChEBI" id="CHEBI:43474"/>
        <dbReference type="ChEBI" id="CHEBI:149469"/>
        <dbReference type="ChEBI" id="CHEBI:149473"/>
        <dbReference type="ChEBI" id="CHEBI:456216"/>
        <dbReference type="EC" id="6.3.3.3"/>
    </reaction>
</comment>
<comment type="cofactor">
    <cofactor evidence="1">
        <name>Mg(2+)</name>
        <dbReference type="ChEBI" id="CHEBI:18420"/>
    </cofactor>
</comment>
<comment type="pathway">
    <text evidence="1">Cofactor biosynthesis; biotin biosynthesis; biotin from 7,8-diaminononanoate: step 1/2.</text>
</comment>
<comment type="subunit">
    <text evidence="1">Homodimer.</text>
</comment>
<comment type="subcellular location">
    <subcellularLocation>
        <location evidence="1">Cytoplasm</location>
    </subcellularLocation>
</comment>
<comment type="similarity">
    <text evidence="1">Belongs to the dethiobiotin synthetase family.</text>
</comment>
<proteinExistence type="inferred from homology"/>
<evidence type="ECO:0000255" key="1">
    <source>
        <dbReference type="HAMAP-Rule" id="MF_00336"/>
    </source>
</evidence>
<accession>P0A6E9</accession>
<accession>P77201</accession>
<accession>Q8X788</accession>
<protein>
    <recommendedName>
        <fullName evidence="1">ATP-dependent dethiobiotin synthetase BioD 2</fullName>
        <ecNumber evidence="1">6.3.3.3</ecNumber>
    </recommendedName>
    <alternativeName>
        <fullName evidence="1">DTB synthetase 2</fullName>
        <shortName evidence="1">DTBS 2</shortName>
    </alternativeName>
    <alternativeName>
        <fullName evidence="1">Dethiobiotin synthase 2</fullName>
    </alternativeName>
</protein>
<reference key="1">
    <citation type="journal article" date="1996" name="DNA Res.">
        <title>A 570-kb DNA sequence of the Escherichia coli K-12 genome corresponding to the 28.0-40.1 min region on the linkage map.</title>
        <authorList>
            <person name="Aiba H."/>
            <person name="Baba T."/>
            <person name="Fujita K."/>
            <person name="Hayashi K."/>
            <person name="Inada T."/>
            <person name="Isono K."/>
            <person name="Itoh T."/>
            <person name="Kasai H."/>
            <person name="Kashimoto K."/>
            <person name="Kimura S."/>
            <person name="Kitakawa M."/>
            <person name="Kitagawa M."/>
            <person name="Makino K."/>
            <person name="Miki T."/>
            <person name="Mizobuchi K."/>
            <person name="Mori H."/>
            <person name="Mori T."/>
            <person name="Motomura K."/>
            <person name="Nakade S."/>
            <person name="Nakamura Y."/>
            <person name="Nashimoto H."/>
            <person name="Nishio Y."/>
            <person name="Oshima T."/>
            <person name="Saito N."/>
            <person name="Sampei G."/>
            <person name="Seki Y."/>
            <person name="Sivasundaram S."/>
            <person name="Tagami H."/>
            <person name="Takeda J."/>
            <person name="Takemoto K."/>
            <person name="Takeuchi Y."/>
            <person name="Wada C."/>
            <person name="Yamamoto Y."/>
            <person name="Horiuchi T."/>
        </authorList>
    </citation>
    <scope>NUCLEOTIDE SEQUENCE [LARGE SCALE GENOMIC DNA]</scope>
    <source>
        <strain>K12 / W3110 / ATCC 27325 / DSM 5911</strain>
    </source>
</reference>
<reference key="2">
    <citation type="journal article" date="1997" name="Science">
        <title>The complete genome sequence of Escherichia coli K-12.</title>
        <authorList>
            <person name="Blattner F.R."/>
            <person name="Plunkett G. III"/>
            <person name="Bloch C.A."/>
            <person name="Perna N.T."/>
            <person name="Burland V."/>
            <person name="Riley M."/>
            <person name="Collado-Vides J."/>
            <person name="Glasner J.D."/>
            <person name="Rode C.K."/>
            <person name="Mayhew G.F."/>
            <person name="Gregor J."/>
            <person name="Davis N.W."/>
            <person name="Kirkpatrick H.A."/>
            <person name="Goeden M.A."/>
            <person name="Rose D.J."/>
            <person name="Mau B."/>
            <person name="Shao Y."/>
        </authorList>
    </citation>
    <scope>NUCLEOTIDE SEQUENCE [LARGE SCALE GENOMIC DNA]</scope>
    <source>
        <strain>K12 / MG1655 / ATCC 47076</strain>
    </source>
</reference>
<reference key="3">
    <citation type="journal article" date="2006" name="Mol. Syst. Biol.">
        <title>Highly accurate genome sequences of Escherichia coli K-12 strains MG1655 and W3110.</title>
        <authorList>
            <person name="Hayashi K."/>
            <person name="Morooka N."/>
            <person name="Yamamoto Y."/>
            <person name="Fujita K."/>
            <person name="Isono K."/>
            <person name="Choi S."/>
            <person name="Ohtsubo E."/>
            <person name="Baba T."/>
            <person name="Wanner B.L."/>
            <person name="Mori H."/>
            <person name="Horiuchi T."/>
        </authorList>
    </citation>
    <scope>NUCLEOTIDE SEQUENCE [LARGE SCALE GENOMIC DNA]</scope>
    <source>
        <strain>K12 / W3110 / ATCC 27325 / DSM 5911</strain>
    </source>
</reference>
<keyword id="KW-0067">ATP-binding</keyword>
<keyword id="KW-0093">Biotin biosynthesis</keyword>
<keyword id="KW-0963">Cytoplasm</keyword>
<keyword id="KW-0436">Ligase</keyword>
<keyword id="KW-0460">Magnesium</keyword>
<keyword id="KW-0479">Metal-binding</keyword>
<keyword id="KW-0547">Nucleotide-binding</keyword>
<keyword id="KW-1185">Reference proteome</keyword>
<name>BIOD2_ECOLI</name>
<sequence length="231" mass="24981">MLKRFFITGTDTSVGKTVVSRALLQALASQGKTVAGYKPVAKGSKETPEGLRNKDALVLQSVSTIELPYEAVNPIALSEEESSVAHSCPINYTLISNGLANLTEKVDHVVVEGTGGWRSLMNDLRPLSEWVVQEQLPVLMVVGIQEGCINHALLTAQAIANDGLPLIGWVANRINPGLAHYAEIIDVLGKKLPAPLIGELPYLPRAEQRELGQYIRLAMLRSVLAVDRVTV</sequence>
<feature type="chain" id="PRO_0000187962" description="ATP-dependent dethiobiotin synthetase BioD 2">
    <location>
        <begin position="1"/>
        <end position="231"/>
    </location>
</feature>
<feature type="active site" evidence="1">
    <location>
        <position position="38"/>
    </location>
</feature>
<feature type="binding site" evidence="1">
    <location>
        <begin position="13"/>
        <end position="18"/>
    </location>
    <ligand>
        <name>ATP</name>
        <dbReference type="ChEBI" id="CHEBI:30616"/>
    </ligand>
</feature>
<feature type="binding site" evidence="1">
    <location>
        <position position="17"/>
    </location>
    <ligand>
        <name>Mg(2+)</name>
        <dbReference type="ChEBI" id="CHEBI:18420"/>
    </ligand>
</feature>
<feature type="binding site" evidence="1">
    <location>
        <position position="55"/>
    </location>
    <ligand>
        <name>ATP</name>
        <dbReference type="ChEBI" id="CHEBI:30616"/>
    </ligand>
</feature>
<feature type="binding site" evidence="1">
    <location>
        <position position="55"/>
    </location>
    <ligand>
        <name>Mg(2+)</name>
        <dbReference type="ChEBI" id="CHEBI:18420"/>
    </ligand>
</feature>
<feature type="binding site" evidence="1">
    <location>
        <begin position="112"/>
        <end position="115"/>
    </location>
    <ligand>
        <name>ATP</name>
        <dbReference type="ChEBI" id="CHEBI:30616"/>
    </ligand>
</feature>
<feature type="binding site" evidence="1">
    <location>
        <position position="112"/>
    </location>
    <ligand>
        <name>Mg(2+)</name>
        <dbReference type="ChEBI" id="CHEBI:18420"/>
    </ligand>
</feature>
<feature type="binding site" evidence="1">
    <location>
        <begin position="172"/>
        <end position="173"/>
    </location>
    <ligand>
        <name>ATP</name>
        <dbReference type="ChEBI" id="CHEBI:30616"/>
    </ligand>
</feature>
<feature type="binding site" evidence="1">
    <location>
        <begin position="201"/>
        <end position="203"/>
    </location>
    <ligand>
        <name>ATP</name>
        <dbReference type="ChEBI" id="CHEBI:30616"/>
    </ligand>
</feature>
<feature type="binding site" evidence="1">
    <location>
        <position position="208"/>
    </location>
    <ligand>
        <name>ATP</name>
        <dbReference type="ChEBI" id="CHEBI:30616"/>
    </ligand>
</feature>
<gene>
    <name evidence="1" type="primary">bioD2</name>
    <name type="synonym">ynfK</name>
    <name type="ordered locus">b1593</name>
    <name type="ordered locus">JW5264</name>
</gene>